<keyword id="KW-0064">Aspartyl protease</keyword>
<keyword id="KW-0378">Hydrolase</keyword>
<keyword id="KW-0645">Protease</keyword>
<keyword id="KW-1185">Reference proteome</keyword>
<keyword id="KW-0677">Repeat</keyword>
<keyword id="KW-0732">Signal</keyword>
<evidence type="ECO:0000255" key="1"/>
<evidence type="ECO:0000255" key="2">
    <source>
        <dbReference type="PROSITE-ProRule" id="PRU01103"/>
    </source>
</evidence>
<evidence type="ECO:0000255" key="3">
    <source>
        <dbReference type="PROSITE-ProRule" id="PRU10094"/>
    </source>
</evidence>
<evidence type="ECO:0000305" key="4"/>
<reference key="1">
    <citation type="submission" date="2000-09" db="EMBL/GenBank/DDBJ databases">
        <title>OSAP1, encodes an aspartic protease-like protein, expresses synchronally during the degeneration of nucellus in rice.</title>
        <authorList>
            <person name="Yang Y.-Y."/>
            <person name="Yang J.-Y."/>
            <person name="Chung M.-C."/>
            <person name="Leu W.-M."/>
        </authorList>
    </citation>
    <scope>NUCLEOTIDE SEQUENCE [GENOMIC DNA / MRNA]</scope>
    <source>
        <strain>cv. Tainung 67</strain>
    </source>
</reference>
<reference key="2">
    <citation type="journal article" date="2005" name="BMC Biol.">
        <title>The sequence of rice chromosomes 11 and 12, rich in disease resistance genes and recent gene duplications.</title>
        <authorList>
            <consortium name="The rice chromosomes 11 and 12 sequencing consortia"/>
        </authorList>
    </citation>
    <scope>NUCLEOTIDE SEQUENCE [LARGE SCALE GENOMIC DNA]</scope>
    <source>
        <strain>cv. Nipponbare</strain>
    </source>
</reference>
<reference key="3">
    <citation type="journal article" date="2005" name="Nature">
        <title>The map-based sequence of the rice genome.</title>
        <authorList>
            <consortium name="International rice genome sequencing project (IRGSP)"/>
        </authorList>
    </citation>
    <scope>NUCLEOTIDE SEQUENCE [LARGE SCALE GENOMIC DNA]</scope>
    <source>
        <strain>cv. Nipponbare</strain>
    </source>
</reference>
<reference key="4">
    <citation type="journal article" date="2008" name="Nucleic Acids Res.">
        <title>The rice annotation project database (RAP-DB): 2008 update.</title>
        <authorList>
            <consortium name="The rice annotation project (RAP)"/>
        </authorList>
    </citation>
    <scope>GENOME REANNOTATION</scope>
    <source>
        <strain>cv. Nipponbare</strain>
    </source>
</reference>
<reference key="5">
    <citation type="journal article" date="2013" name="Rice">
        <title>Improvement of the Oryza sativa Nipponbare reference genome using next generation sequence and optical map data.</title>
        <authorList>
            <person name="Kawahara Y."/>
            <person name="de la Bastide M."/>
            <person name="Hamilton J.P."/>
            <person name="Kanamori H."/>
            <person name="McCombie W.R."/>
            <person name="Ouyang S."/>
            <person name="Schwartz D.C."/>
            <person name="Tanaka T."/>
            <person name="Wu J."/>
            <person name="Zhou S."/>
            <person name="Childs K.L."/>
            <person name="Davidson R.M."/>
            <person name="Lin H."/>
            <person name="Quesada-Ocampo L."/>
            <person name="Vaillancourt B."/>
            <person name="Sakai H."/>
            <person name="Lee S.S."/>
            <person name="Kim J."/>
            <person name="Numa H."/>
            <person name="Itoh T."/>
            <person name="Buell C.R."/>
            <person name="Matsumoto T."/>
        </authorList>
    </citation>
    <scope>GENOME REANNOTATION</scope>
    <source>
        <strain>cv. Nipponbare</strain>
    </source>
</reference>
<reference key="6">
    <citation type="journal article" date="2005" name="PLoS Biol.">
        <title>The genomes of Oryza sativa: a history of duplications.</title>
        <authorList>
            <person name="Yu J."/>
            <person name="Wang J."/>
            <person name="Lin W."/>
            <person name="Li S."/>
            <person name="Li H."/>
            <person name="Zhou J."/>
            <person name="Ni P."/>
            <person name="Dong W."/>
            <person name="Hu S."/>
            <person name="Zeng C."/>
            <person name="Zhang J."/>
            <person name="Zhang Y."/>
            <person name="Li R."/>
            <person name="Xu Z."/>
            <person name="Li S."/>
            <person name="Li X."/>
            <person name="Zheng H."/>
            <person name="Cong L."/>
            <person name="Lin L."/>
            <person name="Yin J."/>
            <person name="Geng J."/>
            <person name="Li G."/>
            <person name="Shi J."/>
            <person name="Liu J."/>
            <person name="Lv H."/>
            <person name="Li J."/>
            <person name="Wang J."/>
            <person name="Deng Y."/>
            <person name="Ran L."/>
            <person name="Shi X."/>
            <person name="Wang X."/>
            <person name="Wu Q."/>
            <person name="Li C."/>
            <person name="Ren X."/>
            <person name="Wang J."/>
            <person name="Wang X."/>
            <person name="Li D."/>
            <person name="Liu D."/>
            <person name="Zhang X."/>
            <person name="Ji Z."/>
            <person name="Zhao W."/>
            <person name="Sun Y."/>
            <person name="Zhang Z."/>
            <person name="Bao J."/>
            <person name="Han Y."/>
            <person name="Dong L."/>
            <person name="Ji J."/>
            <person name="Chen P."/>
            <person name="Wu S."/>
            <person name="Liu J."/>
            <person name="Xiao Y."/>
            <person name="Bu D."/>
            <person name="Tan J."/>
            <person name="Yang L."/>
            <person name="Ye C."/>
            <person name="Zhang J."/>
            <person name="Xu J."/>
            <person name="Zhou Y."/>
            <person name="Yu Y."/>
            <person name="Zhang B."/>
            <person name="Zhuang S."/>
            <person name="Wei H."/>
            <person name="Liu B."/>
            <person name="Lei M."/>
            <person name="Yu H."/>
            <person name="Li Y."/>
            <person name="Xu H."/>
            <person name="Wei S."/>
            <person name="He X."/>
            <person name="Fang L."/>
            <person name="Zhang Z."/>
            <person name="Zhang Y."/>
            <person name="Huang X."/>
            <person name="Su Z."/>
            <person name="Tong W."/>
            <person name="Li J."/>
            <person name="Tong Z."/>
            <person name="Li S."/>
            <person name="Ye J."/>
            <person name="Wang L."/>
            <person name="Fang L."/>
            <person name="Lei T."/>
            <person name="Chen C.-S."/>
            <person name="Chen H.-C."/>
            <person name="Xu Z."/>
            <person name="Li H."/>
            <person name="Huang H."/>
            <person name="Zhang F."/>
            <person name="Xu H."/>
            <person name="Li N."/>
            <person name="Zhao C."/>
            <person name="Li S."/>
            <person name="Dong L."/>
            <person name="Huang Y."/>
            <person name="Li L."/>
            <person name="Xi Y."/>
            <person name="Qi Q."/>
            <person name="Li W."/>
            <person name="Zhang B."/>
            <person name="Hu W."/>
            <person name="Zhang Y."/>
            <person name="Tian X."/>
            <person name="Jiao Y."/>
            <person name="Liang X."/>
            <person name="Jin J."/>
            <person name="Gao L."/>
            <person name="Zheng W."/>
            <person name="Hao B."/>
            <person name="Liu S.-M."/>
            <person name="Wang W."/>
            <person name="Yuan L."/>
            <person name="Cao M."/>
            <person name="McDermott J."/>
            <person name="Samudrala R."/>
            <person name="Wang J."/>
            <person name="Wong G.K.-S."/>
            <person name="Yang H."/>
        </authorList>
    </citation>
    <scope>NUCLEOTIDE SEQUENCE [LARGE SCALE GENOMIC DNA]</scope>
    <source>
        <strain>cv. Nipponbare</strain>
    </source>
</reference>
<dbReference type="EC" id="3.4.23.-"/>
<dbReference type="EMBL" id="AF308691">
    <property type="protein sequence ID" value="AAQ14543.1"/>
    <property type="molecule type" value="Genomic_DNA"/>
</dbReference>
<dbReference type="EMBL" id="AF308692">
    <property type="protein sequence ID" value="AAQ14544.1"/>
    <property type="molecule type" value="mRNA"/>
</dbReference>
<dbReference type="EMBL" id="AC134047">
    <property type="protein sequence ID" value="AAY23267.1"/>
    <property type="molecule type" value="Genomic_DNA"/>
</dbReference>
<dbReference type="EMBL" id="DP000010">
    <property type="protein sequence ID" value="ABA91764.1"/>
    <property type="molecule type" value="Genomic_DNA"/>
</dbReference>
<dbReference type="EMBL" id="AP008217">
    <property type="protein sequence ID" value="BAF27763.1"/>
    <property type="molecule type" value="Genomic_DNA"/>
</dbReference>
<dbReference type="EMBL" id="AP014967">
    <property type="protein sequence ID" value="BAT12975.1"/>
    <property type="molecule type" value="Genomic_DNA"/>
</dbReference>
<dbReference type="EMBL" id="CM000148">
    <property type="status" value="NOT_ANNOTATED_CDS"/>
    <property type="molecule type" value="Genomic_DNA"/>
</dbReference>
<dbReference type="RefSeq" id="XP_015617283.1">
    <property type="nucleotide sequence ID" value="XM_015761797.1"/>
</dbReference>
<dbReference type="RefSeq" id="XP_015617284.1">
    <property type="nucleotide sequence ID" value="XM_015761798.1"/>
</dbReference>
<dbReference type="RefSeq" id="XP_015617285.1">
    <property type="nucleotide sequence ID" value="XM_015761799.1"/>
</dbReference>
<dbReference type="SMR" id="Q0IU52"/>
<dbReference type="STRING" id="39947.Q0IU52"/>
<dbReference type="PaxDb" id="39947-Q0IU52"/>
<dbReference type="EnsemblPlants" id="Os11t0184800-01">
    <property type="protein sequence ID" value="Os11t0184800-01"/>
    <property type="gene ID" value="Os11g0184800"/>
</dbReference>
<dbReference type="Gramene" id="Os11t0184800-01">
    <property type="protein sequence ID" value="Os11t0184800-01"/>
    <property type="gene ID" value="Os11g0184800"/>
</dbReference>
<dbReference type="KEGG" id="dosa:Os11g0184800"/>
<dbReference type="eggNOG" id="KOG1339">
    <property type="taxonomic scope" value="Eukaryota"/>
</dbReference>
<dbReference type="HOGENOM" id="CLU_005738_3_0_1"/>
<dbReference type="InParanoid" id="Q0IU52"/>
<dbReference type="OMA" id="REHKHYS"/>
<dbReference type="OrthoDB" id="2747330at2759"/>
<dbReference type="Proteomes" id="UP000000763">
    <property type="component" value="Chromosome 11"/>
</dbReference>
<dbReference type="Proteomes" id="UP000007752">
    <property type="component" value="Chromosome 11"/>
</dbReference>
<dbReference type="Proteomes" id="UP000059680">
    <property type="component" value="Chromosome 11"/>
</dbReference>
<dbReference type="ExpressionAtlas" id="Q0IU52">
    <property type="expression patterns" value="baseline and differential"/>
</dbReference>
<dbReference type="GO" id="GO:0004190">
    <property type="term" value="F:aspartic-type endopeptidase activity"/>
    <property type="evidence" value="ECO:0007669"/>
    <property type="project" value="UniProtKB-KW"/>
</dbReference>
<dbReference type="GO" id="GO:0006508">
    <property type="term" value="P:proteolysis"/>
    <property type="evidence" value="ECO:0007669"/>
    <property type="project" value="UniProtKB-KW"/>
</dbReference>
<dbReference type="FunFam" id="2.40.70.10:FF:000027">
    <property type="entry name" value="Aspartic proteinase Asp1 isoform A"/>
    <property type="match status" value="1"/>
</dbReference>
<dbReference type="FunFam" id="2.40.70.10:FF:000015">
    <property type="entry name" value="Aspartyl protease family protein"/>
    <property type="match status" value="1"/>
</dbReference>
<dbReference type="Gene3D" id="2.40.70.10">
    <property type="entry name" value="Acid Proteases"/>
    <property type="match status" value="2"/>
</dbReference>
<dbReference type="InterPro" id="IPR001461">
    <property type="entry name" value="Aspartic_peptidase_A1"/>
</dbReference>
<dbReference type="InterPro" id="IPR001969">
    <property type="entry name" value="Aspartic_peptidase_AS"/>
</dbReference>
<dbReference type="InterPro" id="IPR033121">
    <property type="entry name" value="PEPTIDASE_A1"/>
</dbReference>
<dbReference type="InterPro" id="IPR021109">
    <property type="entry name" value="Peptidase_aspartic_dom_sf"/>
</dbReference>
<dbReference type="InterPro" id="IPR032799">
    <property type="entry name" value="TAXi_C"/>
</dbReference>
<dbReference type="InterPro" id="IPR032861">
    <property type="entry name" value="TAXi_N"/>
</dbReference>
<dbReference type="PANTHER" id="PTHR13683:SF331">
    <property type="entry name" value="ASPARTIC PROTEINASE ASP1"/>
    <property type="match status" value="1"/>
</dbReference>
<dbReference type="PANTHER" id="PTHR13683">
    <property type="entry name" value="ASPARTYL PROTEASES"/>
    <property type="match status" value="1"/>
</dbReference>
<dbReference type="Pfam" id="PF14541">
    <property type="entry name" value="TAXi_C"/>
    <property type="match status" value="1"/>
</dbReference>
<dbReference type="Pfam" id="PF14543">
    <property type="entry name" value="TAXi_N"/>
    <property type="match status" value="1"/>
</dbReference>
<dbReference type="SUPFAM" id="SSF50630">
    <property type="entry name" value="Acid proteases"/>
    <property type="match status" value="1"/>
</dbReference>
<dbReference type="PROSITE" id="PS00141">
    <property type="entry name" value="ASP_PROTEASE"/>
    <property type="match status" value="2"/>
</dbReference>
<dbReference type="PROSITE" id="PS51767">
    <property type="entry name" value="PEPTIDASE_A1"/>
    <property type="match status" value="1"/>
</dbReference>
<comment type="similarity">
    <text evidence="4">Belongs to the peptidase A1 family.</text>
</comment>
<gene>
    <name type="primary">ASP1</name>
    <name type="ordered locus">Os11g0184800</name>
    <name type="ordered locus">LOC_Os11g08200</name>
    <name type="ORF">OsJ_031884</name>
</gene>
<protein>
    <recommendedName>
        <fullName>Aspartic proteinase Asp1</fullName>
        <shortName>OSAP1</shortName>
        <shortName>OsAsp1</shortName>
        <ecNumber>3.4.23.-</ecNumber>
    </recommendedName>
    <alternativeName>
        <fullName>Nucellin-like protein</fullName>
    </alternativeName>
</protein>
<organism>
    <name type="scientific">Oryza sativa subsp. japonica</name>
    <name type="common">Rice</name>
    <dbReference type="NCBI Taxonomy" id="39947"/>
    <lineage>
        <taxon>Eukaryota</taxon>
        <taxon>Viridiplantae</taxon>
        <taxon>Streptophyta</taxon>
        <taxon>Embryophyta</taxon>
        <taxon>Tracheophyta</taxon>
        <taxon>Spermatophyta</taxon>
        <taxon>Magnoliopsida</taxon>
        <taxon>Liliopsida</taxon>
        <taxon>Poales</taxon>
        <taxon>Poaceae</taxon>
        <taxon>BOP clade</taxon>
        <taxon>Oryzoideae</taxon>
        <taxon>Oryzeae</taxon>
        <taxon>Oryzinae</taxon>
        <taxon>Oryza</taxon>
        <taxon>Oryza sativa</taxon>
    </lineage>
</organism>
<accession>Q0IU52</accession>
<accession>Q53NF8</accession>
<accession>Q6YNY7</accession>
<accession>Q6YNY8</accession>
<accession>Q71SA7</accession>
<proteinExistence type="evidence at transcript level"/>
<name>ASP1_ORYSJ</name>
<feature type="signal peptide" evidence="1">
    <location>
        <begin position="1"/>
        <end position="23"/>
    </location>
</feature>
<feature type="propeptide" id="PRO_0000025912" description="Removed in mature form" evidence="1">
    <location>
        <begin position="24"/>
        <end position="46"/>
    </location>
</feature>
<feature type="chain" id="PRO_0000025913" description="Aspartic proteinase Asp1">
    <location>
        <begin position="47"/>
        <end position="410"/>
    </location>
</feature>
<feature type="domain" description="Peptidase A1" evidence="2">
    <location>
        <begin position="38"/>
        <end position="392"/>
    </location>
</feature>
<feature type="active site" evidence="3">
    <location>
        <position position="56"/>
    </location>
</feature>
<feature type="active site" evidence="3">
    <location>
        <position position="257"/>
    </location>
</feature>
<sequence length="410" mass="44722">MTARLALLASLLLLLQLVPPSSAVVLELHGNVYPIGHFFITMNIGDPAKSYFLDIDTGSTLTWLQCDAPCTNCNIVPHVLYKPTPKKLVTCADSLCTDLYTDLGKPKRCGSQKQCDYVIQYVDSSSMGVLVIDRFSLSASNGTNPTTIAFGCGYDQGKKNRNVPIPVDSILGLSRGKVTLLSQLKSQGVITKHVLGHCISSKGGGFLFFGDAQVPTSGVTWTPMNREHKYYSPGHGTLHFDSNSKAISAAPMAVIFDSGATYTYFAAQPYQATLSVVKSTLNSECKFLTEVTEKDRALTVCWKGKDKIVTIDEVKKCFRSLSLEFADGDKKATLEIPPEHYLIISQEGHVCLGILDGSKEHLSLAGTNLIGGITMLDQMVIYDSERSLLGWVNYQCDRIPRSESAITSRL</sequence>